<evidence type="ECO:0000255" key="1">
    <source>
        <dbReference type="HAMAP-Rule" id="MF_00573"/>
    </source>
</evidence>
<evidence type="ECO:0000305" key="2"/>
<accession>Q9V1P2</accession>
<accession>G8ZI20</accession>
<dbReference type="EMBL" id="AJ248284">
    <property type="protein sequence ID" value="CAB49307.1"/>
    <property type="molecule type" value="Genomic_DNA"/>
</dbReference>
<dbReference type="EMBL" id="HE613800">
    <property type="protein sequence ID" value="CCE69763.1"/>
    <property type="molecule type" value="Genomic_DNA"/>
</dbReference>
<dbReference type="PIR" id="D75153">
    <property type="entry name" value="D75153"/>
</dbReference>
<dbReference type="RefSeq" id="WP_010867507.1">
    <property type="nucleotide sequence ID" value="NC_000868.1"/>
</dbReference>
<dbReference type="SMR" id="Q9V1P2"/>
<dbReference type="STRING" id="272844.PAB7092"/>
<dbReference type="KEGG" id="pab:PAB7092"/>
<dbReference type="PATRIC" id="fig|272844.11.peg.406"/>
<dbReference type="eggNOG" id="arCOG04304">
    <property type="taxonomic scope" value="Archaea"/>
</dbReference>
<dbReference type="HOGENOM" id="CLU_100745_3_1_2"/>
<dbReference type="OrthoDB" id="14403at2157"/>
<dbReference type="PhylomeDB" id="Q9V1P2"/>
<dbReference type="Proteomes" id="UP000000810">
    <property type="component" value="Chromosome"/>
</dbReference>
<dbReference type="Proteomes" id="UP000009139">
    <property type="component" value="Chromosome"/>
</dbReference>
<dbReference type="GO" id="GO:1990904">
    <property type="term" value="C:ribonucleoprotein complex"/>
    <property type="evidence" value="ECO:0007669"/>
    <property type="project" value="UniProtKB-KW"/>
</dbReference>
<dbReference type="GO" id="GO:0005840">
    <property type="term" value="C:ribosome"/>
    <property type="evidence" value="ECO:0007669"/>
    <property type="project" value="UniProtKB-KW"/>
</dbReference>
<dbReference type="GO" id="GO:0003735">
    <property type="term" value="F:structural constituent of ribosome"/>
    <property type="evidence" value="ECO:0007669"/>
    <property type="project" value="InterPro"/>
</dbReference>
<dbReference type="GO" id="GO:0006412">
    <property type="term" value="P:translation"/>
    <property type="evidence" value="ECO:0007669"/>
    <property type="project" value="UniProtKB-UniRule"/>
</dbReference>
<dbReference type="Gene3D" id="2.40.10.190">
    <property type="entry name" value="translation elongation factor selb, chain A, domain 4"/>
    <property type="match status" value="1"/>
</dbReference>
<dbReference type="HAMAP" id="MF_00573">
    <property type="entry name" value="Ribosomal_eL33"/>
    <property type="match status" value="1"/>
</dbReference>
<dbReference type="InterPro" id="IPR001780">
    <property type="entry name" value="Ribosomal_eL33"/>
</dbReference>
<dbReference type="InterPro" id="IPR018266">
    <property type="entry name" value="Ribosomal_eL33_CS"/>
</dbReference>
<dbReference type="InterPro" id="IPR038661">
    <property type="entry name" value="Ribosomal_eL33_sf"/>
</dbReference>
<dbReference type="InterPro" id="IPR009000">
    <property type="entry name" value="Transl_B-barrel_sf"/>
</dbReference>
<dbReference type="NCBIfam" id="NF003326">
    <property type="entry name" value="PRK04337.1"/>
    <property type="match status" value="1"/>
</dbReference>
<dbReference type="PANTHER" id="PTHR10902">
    <property type="entry name" value="60S RIBOSOMAL PROTEIN L35A"/>
    <property type="match status" value="1"/>
</dbReference>
<dbReference type="Pfam" id="PF01247">
    <property type="entry name" value="Ribosomal_L35Ae"/>
    <property type="match status" value="1"/>
</dbReference>
<dbReference type="SUPFAM" id="SSF50447">
    <property type="entry name" value="Translation proteins"/>
    <property type="match status" value="1"/>
</dbReference>
<dbReference type="PROSITE" id="PS01105">
    <property type="entry name" value="RIBOSOMAL_L35AE"/>
    <property type="match status" value="1"/>
</dbReference>
<gene>
    <name evidence="1" type="primary">rpl35ae</name>
    <name type="ordered locus">PYRAB03850</name>
    <name type="ORF">PAB7092</name>
</gene>
<reference key="1">
    <citation type="journal article" date="2003" name="Mol. Microbiol.">
        <title>An integrated analysis of the genome of the hyperthermophilic archaeon Pyrococcus abyssi.</title>
        <authorList>
            <person name="Cohen G.N."/>
            <person name="Barbe V."/>
            <person name="Flament D."/>
            <person name="Galperin M."/>
            <person name="Heilig R."/>
            <person name="Lecompte O."/>
            <person name="Poch O."/>
            <person name="Prieur D."/>
            <person name="Querellou J."/>
            <person name="Ripp R."/>
            <person name="Thierry J.-C."/>
            <person name="Van der Oost J."/>
            <person name="Weissenbach J."/>
            <person name="Zivanovic Y."/>
            <person name="Forterre P."/>
        </authorList>
    </citation>
    <scope>NUCLEOTIDE SEQUENCE [LARGE SCALE GENOMIC DNA]</scope>
    <source>
        <strain>GE5 / Orsay</strain>
    </source>
</reference>
<reference key="2">
    <citation type="journal article" date="2012" name="Curr. Microbiol.">
        <title>Re-annotation of two hyperthermophilic archaea Pyrococcus abyssi GE5 and Pyrococcus furiosus DSM 3638.</title>
        <authorList>
            <person name="Gao J."/>
            <person name="Wang J."/>
        </authorList>
    </citation>
    <scope>GENOME REANNOTATION</scope>
    <source>
        <strain>GE5 / Orsay</strain>
    </source>
</reference>
<protein>
    <recommendedName>
        <fullName evidence="1">Large ribosomal subunit protein eL33</fullName>
    </recommendedName>
    <alternativeName>
        <fullName evidence="2">50S ribosomal protein L35Ae</fullName>
    </alternativeName>
</protein>
<comment type="similarity">
    <text evidence="1">Belongs to the eukaryotic ribosomal protein eL33 family.</text>
</comment>
<feature type="chain" id="PRO_0000192811" description="Large ribosomal subunit protein eL33">
    <location>
        <begin position="1"/>
        <end position="87"/>
    </location>
</feature>
<keyword id="KW-0687">Ribonucleoprotein</keyword>
<keyword id="KW-0689">Ribosomal protein</keyword>
<name>RL35A_PYRAB</name>
<organism>
    <name type="scientific">Pyrococcus abyssi (strain GE5 / Orsay)</name>
    <dbReference type="NCBI Taxonomy" id="272844"/>
    <lineage>
        <taxon>Archaea</taxon>
        <taxon>Methanobacteriati</taxon>
        <taxon>Methanobacteriota</taxon>
        <taxon>Thermococci</taxon>
        <taxon>Thermococcales</taxon>
        <taxon>Thermococcaceae</taxon>
        <taxon>Pyrococcus</taxon>
    </lineage>
</organism>
<sequence length="87" mass="9736">MRIKGVVLSYRRSKENQHTNVMIIKPLNVNSREEASKLIGRLVIWKSPSGKLLKGKIVRVHGTKGAVRARFEKGLPGQALGDYVEII</sequence>
<proteinExistence type="inferred from homology"/>